<feature type="chain" id="PRO_0000176278" description="Elongation factor 4">
    <location>
        <begin position="1"/>
        <end position="602"/>
    </location>
</feature>
<feature type="domain" description="tr-type G">
    <location>
        <begin position="7"/>
        <end position="189"/>
    </location>
</feature>
<feature type="binding site" evidence="1">
    <location>
        <begin position="19"/>
        <end position="24"/>
    </location>
    <ligand>
        <name>GTP</name>
        <dbReference type="ChEBI" id="CHEBI:37565"/>
    </ligand>
</feature>
<feature type="binding site" evidence="1">
    <location>
        <begin position="136"/>
        <end position="139"/>
    </location>
    <ligand>
        <name>GTP</name>
        <dbReference type="ChEBI" id="CHEBI:37565"/>
    </ligand>
</feature>
<protein>
    <recommendedName>
        <fullName evidence="1">Elongation factor 4</fullName>
        <shortName evidence="1">EF-4</shortName>
        <ecNumber evidence="1">3.6.5.n1</ecNumber>
    </recommendedName>
    <alternativeName>
        <fullName evidence="1">Ribosomal back-translocase LepA</fullName>
    </alternativeName>
</protein>
<dbReference type="EC" id="3.6.5.n1" evidence="1"/>
<dbReference type="EMBL" id="BA000045">
    <property type="protein sequence ID" value="BAC90704.1"/>
    <property type="molecule type" value="Genomic_DNA"/>
</dbReference>
<dbReference type="RefSeq" id="NP_925709.1">
    <property type="nucleotide sequence ID" value="NC_005125.1"/>
</dbReference>
<dbReference type="RefSeq" id="WP_011142757.1">
    <property type="nucleotide sequence ID" value="NC_005125.1"/>
</dbReference>
<dbReference type="SMR" id="Q7NGX4"/>
<dbReference type="FunCoup" id="Q7NGX4">
    <property type="interactions" value="277"/>
</dbReference>
<dbReference type="STRING" id="251221.gene:10760266"/>
<dbReference type="EnsemblBacteria" id="BAC90704">
    <property type="protein sequence ID" value="BAC90704"/>
    <property type="gene ID" value="BAC90704"/>
</dbReference>
<dbReference type="KEGG" id="gvi:glr2763"/>
<dbReference type="PATRIC" id="fig|251221.4.peg.2790"/>
<dbReference type="eggNOG" id="COG0481">
    <property type="taxonomic scope" value="Bacteria"/>
</dbReference>
<dbReference type="HOGENOM" id="CLU_009995_3_3_3"/>
<dbReference type="InParanoid" id="Q7NGX4"/>
<dbReference type="OrthoDB" id="580826at2"/>
<dbReference type="PhylomeDB" id="Q7NGX4"/>
<dbReference type="Proteomes" id="UP000000557">
    <property type="component" value="Chromosome"/>
</dbReference>
<dbReference type="GO" id="GO:0005886">
    <property type="term" value="C:plasma membrane"/>
    <property type="evidence" value="ECO:0007669"/>
    <property type="project" value="UniProtKB-SubCell"/>
</dbReference>
<dbReference type="GO" id="GO:0005525">
    <property type="term" value="F:GTP binding"/>
    <property type="evidence" value="ECO:0007669"/>
    <property type="project" value="UniProtKB-KW"/>
</dbReference>
<dbReference type="GO" id="GO:0003924">
    <property type="term" value="F:GTPase activity"/>
    <property type="evidence" value="ECO:0007669"/>
    <property type="project" value="InterPro"/>
</dbReference>
<dbReference type="GO" id="GO:0043022">
    <property type="term" value="F:ribosome binding"/>
    <property type="evidence" value="ECO:0000318"/>
    <property type="project" value="GO_Central"/>
</dbReference>
<dbReference type="GO" id="GO:0045727">
    <property type="term" value="P:positive regulation of translation"/>
    <property type="evidence" value="ECO:0000318"/>
    <property type="project" value="GO_Central"/>
</dbReference>
<dbReference type="GO" id="GO:0006412">
    <property type="term" value="P:translation"/>
    <property type="evidence" value="ECO:0007669"/>
    <property type="project" value="UniProtKB-KW"/>
</dbReference>
<dbReference type="CDD" id="cd03699">
    <property type="entry name" value="EF4_II"/>
    <property type="match status" value="1"/>
</dbReference>
<dbReference type="CDD" id="cd16260">
    <property type="entry name" value="EF4_III"/>
    <property type="match status" value="1"/>
</dbReference>
<dbReference type="CDD" id="cd01890">
    <property type="entry name" value="LepA"/>
    <property type="match status" value="1"/>
</dbReference>
<dbReference type="CDD" id="cd03709">
    <property type="entry name" value="lepA_C"/>
    <property type="match status" value="1"/>
</dbReference>
<dbReference type="FunFam" id="3.40.50.300:FF:000078">
    <property type="entry name" value="Elongation factor 4"/>
    <property type="match status" value="1"/>
</dbReference>
<dbReference type="FunFam" id="2.40.30.10:FF:000015">
    <property type="entry name" value="Translation factor GUF1, mitochondrial"/>
    <property type="match status" value="1"/>
</dbReference>
<dbReference type="FunFam" id="3.30.70.240:FF:000007">
    <property type="entry name" value="Translation factor GUF1, mitochondrial"/>
    <property type="match status" value="1"/>
</dbReference>
<dbReference type="FunFam" id="3.30.70.2570:FF:000001">
    <property type="entry name" value="Translation factor GUF1, mitochondrial"/>
    <property type="match status" value="1"/>
</dbReference>
<dbReference type="FunFam" id="3.30.70.870:FF:000004">
    <property type="entry name" value="Translation factor GUF1, mitochondrial"/>
    <property type="match status" value="1"/>
</dbReference>
<dbReference type="Gene3D" id="3.30.70.240">
    <property type="match status" value="1"/>
</dbReference>
<dbReference type="Gene3D" id="3.30.70.2570">
    <property type="entry name" value="Elongation factor 4, C-terminal domain"/>
    <property type="match status" value="1"/>
</dbReference>
<dbReference type="Gene3D" id="3.30.70.870">
    <property type="entry name" value="Elongation Factor G (Translational Gtpase), domain 3"/>
    <property type="match status" value="1"/>
</dbReference>
<dbReference type="Gene3D" id="3.40.50.300">
    <property type="entry name" value="P-loop containing nucleotide triphosphate hydrolases"/>
    <property type="match status" value="1"/>
</dbReference>
<dbReference type="Gene3D" id="2.40.30.10">
    <property type="entry name" value="Translation factors"/>
    <property type="match status" value="1"/>
</dbReference>
<dbReference type="HAMAP" id="MF_03138">
    <property type="entry name" value="GUFP"/>
    <property type="match status" value="1"/>
</dbReference>
<dbReference type="HAMAP" id="MF_00071">
    <property type="entry name" value="LepA"/>
    <property type="match status" value="1"/>
</dbReference>
<dbReference type="InterPro" id="IPR006297">
    <property type="entry name" value="EF-4"/>
</dbReference>
<dbReference type="InterPro" id="IPR035647">
    <property type="entry name" value="EFG_III/V"/>
</dbReference>
<dbReference type="InterPro" id="IPR000640">
    <property type="entry name" value="EFG_V-like"/>
</dbReference>
<dbReference type="InterPro" id="IPR004161">
    <property type="entry name" value="EFTu-like_2"/>
</dbReference>
<dbReference type="InterPro" id="IPR031157">
    <property type="entry name" value="G_TR_CS"/>
</dbReference>
<dbReference type="InterPro" id="IPR027518">
    <property type="entry name" value="GUFP"/>
</dbReference>
<dbReference type="InterPro" id="IPR038363">
    <property type="entry name" value="LepA_C_sf"/>
</dbReference>
<dbReference type="InterPro" id="IPR013842">
    <property type="entry name" value="LepA_CTD"/>
</dbReference>
<dbReference type="InterPro" id="IPR035654">
    <property type="entry name" value="LepA_IV"/>
</dbReference>
<dbReference type="InterPro" id="IPR027417">
    <property type="entry name" value="P-loop_NTPase"/>
</dbReference>
<dbReference type="InterPro" id="IPR005225">
    <property type="entry name" value="Small_GTP-bd"/>
</dbReference>
<dbReference type="InterPro" id="IPR000795">
    <property type="entry name" value="T_Tr_GTP-bd_dom"/>
</dbReference>
<dbReference type="InterPro" id="IPR009000">
    <property type="entry name" value="Transl_B-barrel_sf"/>
</dbReference>
<dbReference type="NCBIfam" id="TIGR01393">
    <property type="entry name" value="lepA"/>
    <property type="match status" value="1"/>
</dbReference>
<dbReference type="NCBIfam" id="TIGR00231">
    <property type="entry name" value="small_GTP"/>
    <property type="match status" value="1"/>
</dbReference>
<dbReference type="PANTHER" id="PTHR43512:SF4">
    <property type="entry name" value="TRANSLATION FACTOR GUF1 HOMOLOG, CHLOROPLASTIC"/>
    <property type="match status" value="1"/>
</dbReference>
<dbReference type="PANTHER" id="PTHR43512">
    <property type="entry name" value="TRANSLATION FACTOR GUF1-RELATED"/>
    <property type="match status" value="1"/>
</dbReference>
<dbReference type="Pfam" id="PF00679">
    <property type="entry name" value="EFG_C"/>
    <property type="match status" value="1"/>
</dbReference>
<dbReference type="Pfam" id="PF00009">
    <property type="entry name" value="GTP_EFTU"/>
    <property type="match status" value="1"/>
</dbReference>
<dbReference type="Pfam" id="PF03144">
    <property type="entry name" value="GTP_EFTU_D2"/>
    <property type="match status" value="1"/>
</dbReference>
<dbReference type="Pfam" id="PF06421">
    <property type="entry name" value="LepA_C"/>
    <property type="match status" value="1"/>
</dbReference>
<dbReference type="PRINTS" id="PR00315">
    <property type="entry name" value="ELONGATNFCT"/>
</dbReference>
<dbReference type="SMART" id="SM00838">
    <property type="entry name" value="EFG_C"/>
    <property type="match status" value="1"/>
</dbReference>
<dbReference type="SUPFAM" id="SSF54980">
    <property type="entry name" value="EF-G C-terminal domain-like"/>
    <property type="match status" value="2"/>
</dbReference>
<dbReference type="SUPFAM" id="SSF52540">
    <property type="entry name" value="P-loop containing nucleoside triphosphate hydrolases"/>
    <property type="match status" value="1"/>
</dbReference>
<dbReference type="SUPFAM" id="SSF50447">
    <property type="entry name" value="Translation proteins"/>
    <property type="match status" value="1"/>
</dbReference>
<dbReference type="PROSITE" id="PS00301">
    <property type="entry name" value="G_TR_1"/>
    <property type="match status" value="1"/>
</dbReference>
<dbReference type="PROSITE" id="PS51722">
    <property type="entry name" value="G_TR_2"/>
    <property type="match status" value="1"/>
</dbReference>
<keyword id="KW-0997">Cell inner membrane</keyword>
<keyword id="KW-1003">Cell membrane</keyword>
<keyword id="KW-0342">GTP-binding</keyword>
<keyword id="KW-0378">Hydrolase</keyword>
<keyword id="KW-0472">Membrane</keyword>
<keyword id="KW-0547">Nucleotide-binding</keyword>
<keyword id="KW-0648">Protein biosynthesis</keyword>
<keyword id="KW-1185">Reference proteome</keyword>
<comment type="function">
    <text evidence="1">Required for accurate and efficient protein synthesis under certain stress conditions. May act as a fidelity factor of the translation reaction, by catalyzing a one-codon backward translocation of tRNAs on improperly translocated ribosomes. Back-translocation proceeds from a post-translocation (POST) complex to a pre-translocation (PRE) complex, thus giving elongation factor G a second chance to translocate the tRNAs correctly. Binds to ribosomes in a GTP-dependent manner.</text>
</comment>
<comment type="catalytic activity">
    <reaction evidence="1">
        <text>GTP + H2O = GDP + phosphate + H(+)</text>
        <dbReference type="Rhea" id="RHEA:19669"/>
        <dbReference type="ChEBI" id="CHEBI:15377"/>
        <dbReference type="ChEBI" id="CHEBI:15378"/>
        <dbReference type="ChEBI" id="CHEBI:37565"/>
        <dbReference type="ChEBI" id="CHEBI:43474"/>
        <dbReference type="ChEBI" id="CHEBI:58189"/>
        <dbReference type="EC" id="3.6.5.n1"/>
    </reaction>
</comment>
<comment type="subcellular location">
    <subcellularLocation>
        <location evidence="1">Cell inner membrane</location>
        <topology evidence="1">Peripheral membrane protein</topology>
        <orientation evidence="1">Cytoplasmic side</orientation>
    </subcellularLocation>
</comment>
<comment type="similarity">
    <text evidence="1">Belongs to the TRAFAC class translation factor GTPase superfamily. Classic translation factor GTPase family. LepA subfamily.</text>
</comment>
<name>LEPA_GLOVI</name>
<gene>
    <name evidence="1" type="primary">lepA</name>
    <name type="ordered locus">glr2763</name>
</gene>
<accession>Q7NGX4</accession>
<evidence type="ECO:0000255" key="1">
    <source>
        <dbReference type="HAMAP-Rule" id="MF_00071"/>
    </source>
</evidence>
<proteinExistence type="inferred from homology"/>
<organism>
    <name type="scientific">Gloeobacter violaceus (strain ATCC 29082 / PCC 7421)</name>
    <dbReference type="NCBI Taxonomy" id="251221"/>
    <lineage>
        <taxon>Bacteria</taxon>
        <taxon>Bacillati</taxon>
        <taxon>Cyanobacteriota</taxon>
        <taxon>Cyanophyceae</taxon>
        <taxon>Gloeobacterales</taxon>
        <taxon>Gloeobacteraceae</taxon>
        <taxon>Gloeobacter</taxon>
    </lineage>
</organism>
<sequence length="602" mass="66664">MTAVPVSQIRNFSIIAHIDHGKSTLADRLLQVTGTVSDRNMTAQYLDNMDLERERGITIKLQAARMEYVADDGEKYILNLIDTPGHVDFTYEVSRSLAACEGALLVVDASQGVEAQTLANVYLAIENNLEIIPVLNKIDLPGAEPERVLDEIEEIIGLERTGAIRASAKEGIGIHDILEAIVHRIPPPADTVAEPLQALIFDSYYDAYRGVIVYFRVMSGSVKKGNKIRFMASGKEFEIDEIGVLKPFQVPVDELHAGEVGYIAAAIKLVQDARVGDTITLVSNPAATPLPGYQEAMPVVFCGLYPTDSDQFEDLREALDKLSLNDAALHFEPESSGALGFGFRCGFLGLLHMEVVQERLEREYDLDLVTTAPSVVYRVNKTDGTVLEVQNPADLPPSQLRTSIEEPYVKVELITPQEFVGTLMELSQGRRGIFKDMRYLTPTRTTLIYEIPLAEVITDFFDQMKSRSRGYASMEYQLIGFREGNLVRLDIVLNGEPVDSLSCITHADKAPEVGRQLTAKLKELIPRQQFQVPIQAAIGSKVVARENIAPLRKNVLAKCYGGDISRKKKLLEKQKKGKKRMKSIGSVDVPQEAFMAVLKLEG</sequence>
<reference key="1">
    <citation type="journal article" date="2003" name="DNA Res.">
        <title>Complete genome structure of Gloeobacter violaceus PCC 7421, a cyanobacterium that lacks thylakoids.</title>
        <authorList>
            <person name="Nakamura Y."/>
            <person name="Kaneko T."/>
            <person name="Sato S."/>
            <person name="Mimuro M."/>
            <person name="Miyashita H."/>
            <person name="Tsuchiya T."/>
            <person name="Sasamoto S."/>
            <person name="Watanabe A."/>
            <person name="Kawashima K."/>
            <person name="Kishida Y."/>
            <person name="Kiyokawa C."/>
            <person name="Kohara M."/>
            <person name="Matsumoto M."/>
            <person name="Matsuno A."/>
            <person name="Nakazaki N."/>
            <person name="Shimpo S."/>
            <person name="Takeuchi C."/>
            <person name="Yamada M."/>
            <person name="Tabata S."/>
        </authorList>
    </citation>
    <scope>NUCLEOTIDE SEQUENCE [LARGE SCALE GENOMIC DNA]</scope>
    <source>
        <strain>ATCC 29082 / PCC 7421</strain>
    </source>
</reference>